<feature type="chain" id="PRO_0000220870" description="Ornithine decarboxylase antizyme">
    <location>
        <begin position="1"/>
        <end position="226"/>
    </location>
</feature>
<feature type="sequence conflict" description="In Ref. 1; BAA13889." evidence="2" ref="1">
    <original>P</original>
    <variation>A</variation>
    <location>
        <position position="100"/>
    </location>
</feature>
<accession>Q9USQ5</accession>
<accession>P78878</accession>
<proteinExistence type="evidence at protein level"/>
<dbReference type="EMBL" id="AF217277">
    <property type="protein sequence ID" value="AAF68268.1"/>
    <property type="molecule type" value="mRNA"/>
</dbReference>
<dbReference type="EMBL" id="D89228">
    <property type="protein sequence ID" value="BAA13889.1"/>
    <property type="status" value="ALT_SEQ"/>
    <property type="molecule type" value="mRNA"/>
</dbReference>
<dbReference type="EMBL" id="CU329671">
    <property type="protein sequence ID" value="CAB54822.2"/>
    <property type="molecule type" value="Genomic_DNA"/>
</dbReference>
<dbReference type="PIR" id="T40558">
    <property type="entry name" value="T40558"/>
</dbReference>
<dbReference type="PIR" id="T43062">
    <property type="entry name" value="T43062"/>
</dbReference>
<dbReference type="RefSeq" id="NP_595312.1">
    <property type="nucleotide sequence ID" value="NM_001021219.2"/>
</dbReference>
<dbReference type="BioGRID" id="277398">
    <property type="interactions" value="13"/>
</dbReference>
<dbReference type="FunCoup" id="Q9USQ5">
    <property type="interactions" value="200"/>
</dbReference>
<dbReference type="STRING" id="284812.Q9USQ5"/>
<dbReference type="PaxDb" id="4896-SPBC577.14c.1"/>
<dbReference type="EnsemblFungi" id="SPBC577.14c.1">
    <molecule id="Q9USQ5-1"/>
    <property type="protein sequence ID" value="SPBC577.14c.1:pep"/>
    <property type="gene ID" value="SPBC577.14c"/>
</dbReference>
<dbReference type="GeneID" id="2540881"/>
<dbReference type="KEGG" id="spo:2540881"/>
<dbReference type="PomBase" id="SPBC577.14c">
    <property type="gene designation" value="spa1"/>
</dbReference>
<dbReference type="VEuPathDB" id="FungiDB:SPBC577.14c"/>
<dbReference type="eggNOG" id="KOG4387">
    <property type="taxonomic scope" value="Eukaryota"/>
</dbReference>
<dbReference type="HOGENOM" id="CLU_1225409_0_0_1"/>
<dbReference type="InParanoid" id="Q9USQ5"/>
<dbReference type="OMA" id="HVPRWIS"/>
<dbReference type="Reactome" id="R-SPO-350562">
    <property type="pathway name" value="Regulation of ornithine decarboxylase (ODC)"/>
</dbReference>
<dbReference type="PRO" id="PR:Q9USQ5"/>
<dbReference type="Proteomes" id="UP000002485">
    <property type="component" value="Chromosome II"/>
</dbReference>
<dbReference type="GO" id="GO:0005737">
    <property type="term" value="C:cytoplasm"/>
    <property type="evidence" value="ECO:0000318"/>
    <property type="project" value="GO_Central"/>
</dbReference>
<dbReference type="GO" id="GO:0005634">
    <property type="term" value="C:nucleus"/>
    <property type="evidence" value="ECO:0000318"/>
    <property type="project" value="GO_Central"/>
</dbReference>
<dbReference type="GO" id="GO:0008073">
    <property type="term" value="F:ornithine decarboxylase inhibitor activity"/>
    <property type="evidence" value="ECO:0000318"/>
    <property type="project" value="GO_Central"/>
</dbReference>
<dbReference type="GO" id="GO:0006591">
    <property type="term" value="P:ornithine metabolic process"/>
    <property type="evidence" value="ECO:0000305"/>
    <property type="project" value="PomBase"/>
</dbReference>
<dbReference type="GO" id="GO:0045732">
    <property type="term" value="P:positive regulation of protein catabolic process"/>
    <property type="evidence" value="ECO:0000318"/>
    <property type="project" value="GO_Central"/>
</dbReference>
<dbReference type="GO" id="GO:0010967">
    <property type="term" value="P:regulation of polyamine biosynthetic process"/>
    <property type="evidence" value="ECO:0000304"/>
    <property type="project" value="PomBase"/>
</dbReference>
<dbReference type="Gene3D" id="3.40.630.60">
    <property type="match status" value="1"/>
</dbReference>
<dbReference type="InterPro" id="IPR016181">
    <property type="entry name" value="Acyl_CoA_acyltransferase"/>
</dbReference>
<dbReference type="InterPro" id="IPR002993">
    <property type="entry name" value="ODC_AZ"/>
</dbReference>
<dbReference type="InterPro" id="IPR038581">
    <property type="entry name" value="ODC_AZ_sf"/>
</dbReference>
<dbReference type="PANTHER" id="PTHR10279">
    <property type="entry name" value="ORNITHINE DECARBOXYLASE ANTIZYME"/>
    <property type="match status" value="1"/>
</dbReference>
<dbReference type="PANTHER" id="PTHR10279:SF10">
    <property type="entry name" value="ORNITHINE DECARBOXYLASE ANTIZYME"/>
    <property type="match status" value="1"/>
</dbReference>
<dbReference type="Pfam" id="PF02100">
    <property type="entry name" value="ODC_AZ"/>
    <property type="match status" value="1"/>
</dbReference>
<dbReference type="SUPFAM" id="SSF55729">
    <property type="entry name" value="Acyl-CoA N-acyltransferases (Nat)"/>
    <property type="match status" value="1"/>
</dbReference>
<sequence>MAFRNRMYQLSNVDDADADILNSHFAPNPRGQNHTHGRRRNTLALCTTKDQMFVYGSTPAGGAEWCSEALERSRPRAAFKQQRRRHVPRWISDSFRTCLPKPSGILKEQTVNEEEGNSRHRGKYDCDERIGVAESMNYWHGIVRTEEDGSKTLFLIPESWEDVHLKEGLVAIIDLAVDRLHCSKLVLFVDKNNSSLPYLVKSLHWVGFEPLPHLNCSDHALFGMEL</sequence>
<reference key="1">
    <citation type="journal article" date="2000" name="EMBO J.">
        <title>Conservation of polyamine regulation by translational frameshifting from yeast to mammals.</title>
        <authorList>
            <person name="Ivanov I.P."/>
            <person name="Matsufuji S."/>
            <person name="Murakami Y."/>
            <person name="Gesteland R.F."/>
            <person name="Atkins J.F."/>
        </authorList>
    </citation>
    <scope>NUCLEOTIDE SEQUENCE [MRNA]</scope>
    <scope>CHARACTERIZATION</scope>
</reference>
<reference key="2">
    <citation type="journal article" date="1997" name="DNA Res.">
        <title>Identification of open reading frames in Schizosaccharomyces pombe cDNAs.</title>
        <authorList>
            <person name="Yoshioka S."/>
            <person name="Kato K."/>
            <person name="Nakai K."/>
            <person name="Okayama H."/>
            <person name="Nojima H."/>
        </authorList>
    </citation>
    <scope>NUCLEOTIDE SEQUENCE [LARGE SCALE MRNA]</scope>
    <source>
        <strain>PR745</strain>
    </source>
</reference>
<reference key="3">
    <citation type="journal article" date="2002" name="Nature">
        <title>The genome sequence of Schizosaccharomyces pombe.</title>
        <authorList>
            <person name="Wood V."/>
            <person name="Gwilliam R."/>
            <person name="Rajandream M.A."/>
            <person name="Lyne M.H."/>
            <person name="Lyne R."/>
            <person name="Stewart A."/>
            <person name="Sgouros J.G."/>
            <person name="Peat N."/>
            <person name="Hayles J."/>
            <person name="Baker S.G."/>
            <person name="Basham D."/>
            <person name="Bowman S."/>
            <person name="Brooks K."/>
            <person name="Brown D."/>
            <person name="Brown S."/>
            <person name="Chillingworth T."/>
            <person name="Churcher C.M."/>
            <person name="Collins M."/>
            <person name="Connor R."/>
            <person name="Cronin A."/>
            <person name="Davis P."/>
            <person name="Feltwell T."/>
            <person name="Fraser A."/>
            <person name="Gentles S."/>
            <person name="Goble A."/>
            <person name="Hamlin N."/>
            <person name="Harris D.E."/>
            <person name="Hidalgo J."/>
            <person name="Hodgson G."/>
            <person name="Holroyd S."/>
            <person name="Hornsby T."/>
            <person name="Howarth S."/>
            <person name="Huckle E.J."/>
            <person name="Hunt S."/>
            <person name="Jagels K."/>
            <person name="James K.D."/>
            <person name="Jones L."/>
            <person name="Jones M."/>
            <person name="Leather S."/>
            <person name="McDonald S."/>
            <person name="McLean J."/>
            <person name="Mooney P."/>
            <person name="Moule S."/>
            <person name="Mungall K.L."/>
            <person name="Murphy L.D."/>
            <person name="Niblett D."/>
            <person name="Odell C."/>
            <person name="Oliver K."/>
            <person name="O'Neil S."/>
            <person name="Pearson D."/>
            <person name="Quail M.A."/>
            <person name="Rabbinowitsch E."/>
            <person name="Rutherford K.M."/>
            <person name="Rutter S."/>
            <person name="Saunders D."/>
            <person name="Seeger K."/>
            <person name="Sharp S."/>
            <person name="Skelton J."/>
            <person name="Simmonds M.N."/>
            <person name="Squares R."/>
            <person name="Squares S."/>
            <person name="Stevens K."/>
            <person name="Taylor K."/>
            <person name="Taylor R.G."/>
            <person name="Tivey A."/>
            <person name="Walsh S.V."/>
            <person name="Warren T."/>
            <person name="Whitehead S."/>
            <person name="Woodward J.R."/>
            <person name="Volckaert G."/>
            <person name="Aert R."/>
            <person name="Robben J."/>
            <person name="Grymonprez B."/>
            <person name="Weltjens I."/>
            <person name="Vanstreels E."/>
            <person name="Rieger M."/>
            <person name="Schaefer M."/>
            <person name="Mueller-Auer S."/>
            <person name="Gabel C."/>
            <person name="Fuchs M."/>
            <person name="Duesterhoeft A."/>
            <person name="Fritzc C."/>
            <person name="Holzer E."/>
            <person name="Moestl D."/>
            <person name="Hilbert H."/>
            <person name="Borzym K."/>
            <person name="Langer I."/>
            <person name="Beck A."/>
            <person name="Lehrach H."/>
            <person name="Reinhardt R."/>
            <person name="Pohl T.M."/>
            <person name="Eger P."/>
            <person name="Zimmermann W."/>
            <person name="Wedler H."/>
            <person name="Wambutt R."/>
            <person name="Purnelle B."/>
            <person name="Goffeau A."/>
            <person name="Cadieu E."/>
            <person name="Dreano S."/>
            <person name="Gloux S."/>
            <person name="Lelaure V."/>
            <person name="Mottier S."/>
            <person name="Galibert F."/>
            <person name="Aves S.J."/>
            <person name="Xiang Z."/>
            <person name="Hunt C."/>
            <person name="Moore K."/>
            <person name="Hurst S.M."/>
            <person name="Lucas M."/>
            <person name="Rochet M."/>
            <person name="Gaillardin C."/>
            <person name="Tallada V.A."/>
            <person name="Garzon A."/>
            <person name="Thode G."/>
            <person name="Daga R.R."/>
            <person name="Cruzado L."/>
            <person name="Jimenez J."/>
            <person name="Sanchez M."/>
            <person name="del Rey F."/>
            <person name="Benito J."/>
            <person name="Dominguez A."/>
            <person name="Revuelta J.L."/>
            <person name="Moreno S."/>
            <person name="Armstrong J."/>
            <person name="Forsburg S.L."/>
            <person name="Cerutti L."/>
            <person name="Lowe T."/>
            <person name="McCombie W.R."/>
            <person name="Paulsen I."/>
            <person name="Potashkin J."/>
            <person name="Shpakovski G.V."/>
            <person name="Ussery D."/>
            <person name="Barrell B.G."/>
            <person name="Nurse P."/>
        </authorList>
    </citation>
    <scope>NUCLEOTIDE SEQUENCE [LARGE SCALE GENOMIC DNA]</scope>
    <source>
        <strain>972 / ATCC 24843</strain>
    </source>
</reference>
<reference key="4">
    <citation type="journal article" date="2000" name="Bioinformatics">
        <title>A homolog of mammalian antizyme is present in fission yeast Schizosaccharomyces pombe but not detected in budding yeast Saccharomyces cerevisiae.</title>
        <authorList>
            <person name="Zhu C."/>
            <person name="Karplus K."/>
            <person name="Grate L."/>
            <person name="Coffino P."/>
        </authorList>
    </citation>
    <scope>SIMILARITY TO OAZ</scope>
</reference>
<organism>
    <name type="scientific">Schizosaccharomyces pombe (strain 972 / ATCC 24843)</name>
    <name type="common">Fission yeast</name>
    <dbReference type="NCBI Taxonomy" id="284812"/>
    <lineage>
        <taxon>Eukaryota</taxon>
        <taxon>Fungi</taxon>
        <taxon>Dikarya</taxon>
        <taxon>Ascomycota</taxon>
        <taxon>Taphrinomycotina</taxon>
        <taxon>Schizosaccharomycetes</taxon>
        <taxon>Schizosaccharomycetales</taxon>
        <taxon>Schizosaccharomycetaceae</taxon>
        <taxon>Schizosaccharomyces</taxon>
    </lineage>
</organism>
<name>OAZ_SCHPO</name>
<gene>
    <name type="primary">spa1</name>
    <name type="synonym">spa</name>
    <name type="ORF">SPBC577.14c</name>
</gene>
<evidence type="ECO:0000250" key="1">
    <source>
        <dbReference type="UniProtKB" id="Q02803"/>
    </source>
</evidence>
<evidence type="ECO:0000305" key="2"/>
<protein>
    <recommendedName>
        <fullName>Ornithine decarboxylase antizyme</fullName>
        <shortName>ODC-Az</shortName>
    </recommendedName>
</protein>
<comment type="function">
    <text evidence="1">Ornithine decarboxylase (ODC) antizyme protein that negatively regulates ODC activity and intracellular polyamine biosynthesis in response to increased intracellular polyamine levels. Binds to ODC monomers, inhibiting the assembly of the functional ODC homodimer, and targets the monomers for ubiquitin-independent proteolytic destruction by the 26S proteasome.</text>
</comment>
<comment type="subunit">
    <text evidence="1">Interacts with ODC and thereby sterically blocks ODC homodimerization.</text>
</comment>
<comment type="alternative products">
    <event type="ribosomal frameshifting"/>
    <isoform>
        <id>Q9USQ5-1</id>
        <name>1</name>
        <sequence type="displayed"/>
    </isoform>
    <text>A ribosomal frameshift occurs between the codons for Ser-67 and Glu-68. An autoregulatory mechanism enables modulation of frameshifting according to the cellular concentration of polyamines.</text>
</comment>
<comment type="similarity">
    <text evidence="2">Belongs to the ODC antizyme family.</text>
</comment>
<keyword id="KW-1185">Reference proteome</keyword>
<keyword id="KW-0688">Ribosomal frameshifting</keyword>